<feature type="chain" id="PRO_0000413965" description="Beta-amyrin synthase 1">
    <location>
        <begin position="1"/>
        <end position="763"/>
    </location>
</feature>
<feature type="repeat" description="PFTB 1" evidence="2">
    <location>
        <begin position="100"/>
        <end position="142"/>
    </location>
</feature>
<feature type="repeat" description="PFTB 2" evidence="2">
    <location>
        <begin position="150"/>
        <end position="191"/>
    </location>
</feature>
<feature type="repeat" description="PFTB 3" evidence="2">
    <location>
        <begin position="441"/>
        <end position="485"/>
    </location>
</feature>
<feature type="repeat" description="PFTB 4" evidence="2">
    <location>
        <begin position="515"/>
        <end position="560"/>
    </location>
</feature>
<feature type="repeat" description="PFTB 5" evidence="2">
    <location>
        <begin position="592"/>
        <end position="632"/>
    </location>
</feature>
<feature type="repeat" description="PFTB 6" evidence="2">
    <location>
        <begin position="641"/>
        <end position="682"/>
    </location>
</feature>
<feature type="repeat" description="PFTB 7" evidence="2">
    <location>
        <begin position="703"/>
        <end position="744"/>
    </location>
</feature>
<feature type="active site" description="Proton donor" evidence="1">
    <location>
        <position position="486"/>
    </location>
</feature>
<feature type="site" description="Transition state stabilizer" evidence="1">
    <location>
        <position position="419"/>
    </location>
</feature>
<feature type="site" description="Transition state stabilizer" evidence="1">
    <location>
        <position position="475"/>
    </location>
</feature>
<feature type="site" description="Transition state stabilizer" evidence="1">
    <location>
        <position position="613"/>
    </location>
</feature>
<proteinExistence type="evidence at protein level"/>
<name>BAMS1_PANGI</name>
<evidence type="ECO:0000250" key="1">
    <source>
        <dbReference type="UniProtKB" id="P48449"/>
    </source>
</evidence>
<evidence type="ECO:0000255" key="2"/>
<evidence type="ECO:0000269" key="3">
    <source>
    </source>
</evidence>
<evidence type="ECO:0000269" key="4">
    <source>
    </source>
</evidence>
<evidence type="ECO:0000269" key="5">
    <source>
    </source>
</evidence>
<evidence type="ECO:0000269" key="6">
    <source>
    </source>
</evidence>
<evidence type="ECO:0000269" key="7">
    <source>
    </source>
</evidence>
<evidence type="ECO:0000269" key="8">
    <source>
    </source>
</evidence>
<evidence type="ECO:0000303" key="9">
    <source>
    </source>
</evidence>
<evidence type="ECO:0000303" key="10">
    <source>
    </source>
</evidence>
<evidence type="ECO:0000303" key="11">
    <source>
    </source>
</evidence>
<evidence type="ECO:0000303" key="12">
    <source>
    </source>
</evidence>
<evidence type="ECO:0000303" key="13">
    <source>
    </source>
</evidence>
<evidence type="ECO:0000303" key="14">
    <source>
    </source>
</evidence>
<evidence type="ECO:0000303" key="15">
    <source>
    </source>
</evidence>
<evidence type="ECO:0000303" key="16">
    <source ref="2"/>
</evidence>
<evidence type="ECO:0000305" key="17"/>
<accession>O82140</accession>
<accession>A0A0N7AWI6</accession>
<sequence>MWKLKIAEGNKNDPYLYSTNNFVGRQTWEFDPDYVASPGELEEVEQVRRQFWDNRYQVKPSGDLLWRMQFLREKNFRQTIPQVKVGDDEAVTYEAATTTLRRAVHFFSALQASDGHWPAENSGPLFFLPPLVMCVYITGHLDTVFPAEHRKEILRYIYCHQNEDGGWGLHIEGHSTMFCTTLSYICMRILGEGPDGGVNNACARGRKWILDHGSVTAIPSWGKTWLSILGVYEWIGSNPMPPEFWILPSFLPMHPAKMWCYCRMVYMPMSYLYGKRFVGPITPLILQLREELYGQPYNEINWRKTRRVCAKEDIYYPHPLIQDLLWDSLYVLTEPLLTRWPFNKLREKALQTTMKHIHYEDENSRYITIGCVEKVLCMLVCWVEDPNGDYFRKHLARIPDYIWVAEDGMKMQSFGSQEWDTGFSIQALLDSDLTHEIGPTLMKGHDFIKKSQVKDNPSGDFKSMYRHISKGSWTFSDQDHGWQVSDCTAEGLKCCLIFSTMPEEIVGKKIKPERLYDSVNVLLSLQRKNGGLSAWEPAGAQEWLELLNPTEFFADIVIEHEYVECTSSAIQALVLFKKLYPGHRKKEIDNFITNAVRYLEDTQMPDGSWYGNWGVCFTYGSWFALGGLAAAGKTYYNCAAVRKAVEFLLKSQMDDGGWGESYLSCPKKVYVPLEGNRSNLVHTGWALMGLIHSEQAERDPTPLHRAAKLLINSQMEDGDFPQQEISGVFMKNCMLHYAAYRNIYPLWALAEYRRRVPLPSLGT</sequence>
<protein>
    <recommendedName>
        <fullName evidence="15">Beta-amyrin synthase 1</fullName>
        <shortName evidence="10">Pgb-AS</shortName>
        <ecNumber evidence="8">5.4.99.39</ecNumber>
    </recommendedName>
    <alternativeName>
        <fullName evidence="11">Oxidosqualene cyclase 1</fullName>
    </alternativeName>
</protein>
<keyword id="KW-0256">Endoplasmic reticulum</keyword>
<keyword id="KW-0413">Isomerase</keyword>
<keyword id="KW-0414">Isoprene biosynthesis</keyword>
<keyword id="KW-0472">Membrane</keyword>
<keyword id="KW-0677">Repeat</keyword>
<gene>
    <name evidence="15" type="primary">OSCPNY1</name>
    <name evidence="16" type="synonym">bAS</name>
    <name evidence="14 16" type="synonym">beta-AS</name>
    <name evidence="11 13" type="synonym">PNY1</name>
</gene>
<dbReference type="EC" id="5.4.99.39" evidence="8"/>
<dbReference type="EMBL" id="AB009030">
    <property type="protein sequence ID" value="BAA33461.1"/>
    <property type="molecule type" value="mRNA"/>
</dbReference>
<dbReference type="EMBL" id="KJ939267">
    <property type="protein sequence ID" value="AJV26448.1"/>
    <property type="molecule type" value="mRNA"/>
</dbReference>
<dbReference type="SMR" id="O82140"/>
<dbReference type="KEGG" id="ag:BAA33461"/>
<dbReference type="BioCyc" id="MetaCyc:MONOMER-12195"/>
<dbReference type="BRENDA" id="5.4.99.39">
    <property type="organism ID" value="7895"/>
</dbReference>
<dbReference type="UniPathway" id="UPA00213"/>
<dbReference type="GO" id="GO:0005789">
    <property type="term" value="C:endoplasmic reticulum membrane"/>
    <property type="evidence" value="ECO:0007669"/>
    <property type="project" value="UniProtKB-SubCell"/>
</dbReference>
<dbReference type="GO" id="GO:0005811">
    <property type="term" value="C:lipid droplet"/>
    <property type="evidence" value="ECO:0007669"/>
    <property type="project" value="InterPro"/>
</dbReference>
<dbReference type="GO" id="GO:0042300">
    <property type="term" value="F:beta-amyrin synthase activity"/>
    <property type="evidence" value="ECO:0007669"/>
    <property type="project" value="UniProtKB-EC"/>
</dbReference>
<dbReference type="GO" id="GO:0009723">
    <property type="term" value="P:response to ethylene"/>
    <property type="evidence" value="ECO:0000270"/>
    <property type="project" value="UniProtKB"/>
</dbReference>
<dbReference type="GO" id="GO:0042542">
    <property type="term" value="P:response to hydrogen peroxide"/>
    <property type="evidence" value="ECO:0000270"/>
    <property type="project" value="UniProtKB"/>
</dbReference>
<dbReference type="GO" id="GO:0009753">
    <property type="term" value="P:response to jasmonic acid"/>
    <property type="evidence" value="ECO:0000270"/>
    <property type="project" value="UniProtKB"/>
</dbReference>
<dbReference type="GO" id="GO:0010038">
    <property type="term" value="P:response to metal ion"/>
    <property type="evidence" value="ECO:0000270"/>
    <property type="project" value="UniProtKB"/>
</dbReference>
<dbReference type="GO" id="GO:0002238">
    <property type="term" value="P:response to molecule of fungal origin"/>
    <property type="evidence" value="ECO:0000270"/>
    <property type="project" value="UniProtKB"/>
</dbReference>
<dbReference type="GO" id="GO:0071731">
    <property type="term" value="P:response to nitric oxide"/>
    <property type="evidence" value="ECO:0000270"/>
    <property type="project" value="UniProtKB"/>
</dbReference>
<dbReference type="GO" id="GO:0016104">
    <property type="term" value="P:triterpenoid biosynthetic process"/>
    <property type="evidence" value="ECO:0007669"/>
    <property type="project" value="InterPro"/>
</dbReference>
<dbReference type="CDD" id="cd02892">
    <property type="entry name" value="SQCY_1"/>
    <property type="match status" value="1"/>
</dbReference>
<dbReference type="FunFam" id="1.50.10.20:FF:000011">
    <property type="entry name" value="Terpene cyclase/mutase family member"/>
    <property type="match status" value="1"/>
</dbReference>
<dbReference type="FunFam" id="1.50.10.20:FF:000064">
    <property type="entry name" value="Uncharacterized protein"/>
    <property type="match status" value="1"/>
</dbReference>
<dbReference type="Gene3D" id="1.50.10.20">
    <property type="match status" value="2"/>
</dbReference>
<dbReference type="InterPro" id="IPR032696">
    <property type="entry name" value="SQ_cyclase_C"/>
</dbReference>
<dbReference type="InterPro" id="IPR032697">
    <property type="entry name" value="SQ_cyclase_N"/>
</dbReference>
<dbReference type="InterPro" id="IPR018333">
    <property type="entry name" value="Squalene_cyclase"/>
</dbReference>
<dbReference type="InterPro" id="IPR002365">
    <property type="entry name" value="Terpene_synthase_CS"/>
</dbReference>
<dbReference type="InterPro" id="IPR008930">
    <property type="entry name" value="Terpenoid_cyclase/PrenylTrfase"/>
</dbReference>
<dbReference type="NCBIfam" id="TIGR01787">
    <property type="entry name" value="squalene_cyclas"/>
    <property type="match status" value="1"/>
</dbReference>
<dbReference type="PANTHER" id="PTHR11764:SF58">
    <property type="entry name" value="BETA-AMYRIN SYNTHASE-RELATED"/>
    <property type="match status" value="1"/>
</dbReference>
<dbReference type="PANTHER" id="PTHR11764">
    <property type="entry name" value="TERPENE CYCLASE/MUTASE FAMILY MEMBER"/>
    <property type="match status" value="1"/>
</dbReference>
<dbReference type="Pfam" id="PF13243">
    <property type="entry name" value="SQHop_cyclase_C"/>
    <property type="match status" value="1"/>
</dbReference>
<dbReference type="Pfam" id="PF13249">
    <property type="entry name" value="SQHop_cyclase_N"/>
    <property type="match status" value="1"/>
</dbReference>
<dbReference type="SFLD" id="SFLDG01016">
    <property type="entry name" value="Prenyltransferase_Like_2"/>
    <property type="match status" value="1"/>
</dbReference>
<dbReference type="SUPFAM" id="SSF48239">
    <property type="entry name" value="Terpenoid cyclases/Protein prenyltransferases"/>
    <property type="match status" value="2"/>
</dbReference>
<dbReference type="PROSITE" id="PS01074">
    <property type="entry name" value="TERPENE_SYNTHASES"/>
    <property type="match status" value="1"/>
</dbReference>
<organism>
    <name type="scientific">Panax ginseng</name>
    <name type="common">Korean ginseng</name>
    <dbReference type="NCBI Taxonomy" id="4054"/>
    <lineage>
        <taxon>Eukaryota</taxon>
        <taxon>Viridiplantae</taxon>
        <taxon>Streptophyta</taxon>
        <taxon>Embryophyta</taxon>
        <taxon>Tracheophyta</taxon>
        <taxon>Spermatophyta</taxon>
        <taxon>Magnoliopsida</taxon>
        <taxon>eudicotyledons</taxon>
        <taxon>Gunneridae</taxon>
        <taxon>Pentapetalae</taxon>
        <taxon>asterids</taxon>
        <taxon>campanulids</taxon>
        <taxon>Apiales</taxon>
        <taxon>Araliaceae</taxon>
        <taxon>Panax</taxon>
    </lineage>
</organism>
<reference key="1">
    <citation type="journal article" date="1998" name="Eur. J. Biochem.">
        <title>Beta-amyrin synthase--cloning of oxidosqualene cyclase that catalyzes the formation of the most popular triterpene among higher plants.</title>
        <authorList>
            <person name="Kushiro T."/>
            <person name="Shibuya M."/>
            <person name="Ebizuka Y."/>
        </authorList>
    </citation>
    <scope>NUCLEOTIDE SEQUENCE [MRNA]</scope>
    <scope>FUNCTION</scope>
    <scope>CATALYTIC ACTIVITY</scope>
    <source>
        <tissue>Root</tissue>
    </source>
</reference>
<reference key="2">
    <citation type="submission" date="2014-06" db="EMBL/GenBank/DDBJ databases">
        <title>Cloning and expression analysis of HMGR, SS, SE, DS, and bAS genes in Panax ginseng.</title>
        <authorList>
            <person name="Hou S."/>
            <person name="Han M."/>
            <person name="Liu C."/>
            <person name="Yang L."/>
        </authorList>
    </citation>
    <scope>NUCLEOTIDE SEQUENCE [MRNA]</scope>
</reference>
<reference key="3">
    <citation type="journal article" date="2004" name="Plant Cell Physiol.">
        <title>Enhanced triterpene and phytosterol biosynthesis in Panax ginseng overexpressing squalene synthase gene.</title>
        <authorList>
            <person name="Lee M.-H."/>
            <person name="Jeong J.-H."/>
            <person name="Seo J.-W."/>
            <person name="Shin C.-G."/>
            <person name="Kim Y.-S."/>
            <person name="In J.-G."/>
            <person name="Yang D.-C."/>
            <person name="Yi J.-S."/>
            <person name="Choi Y.-E."/>
        </authorList>
    </citation>
    <scope>INDUCTION BY METHYL JASMONATE</scope>
    <source>
        <strain>cv. Chunpoong</strain>
        <tissue>Leaf</tissue>
    </source>
</reference>
<reference key="4">
    <citation type="journal article" date="2005" name="Plant Cell Physiol.">
        <title>Fungal elicitor induces singlet oxygen generation, ethylene release and saponin synthesis in cultured cells of Panax ginseng C. A. Meyer.</title>
        <authorList>
            <person name="Xu X."/>
            <person name="Hu X."/>
            <person name="Neill S.J."/>
            <person name="Fang J."/>
            <person name="Cai W."/>
        </authorList>
    </citation>
    <scope>INDUCTION BY CLE; ETHYLENE; ROSE BENGAL; NITRIC OXIDE AND HYDROGEN PEROXIDE</scope>
</reference>
<reference key="5">
    <citation type="journal article" date="2005" name="Plant Cell Rep.">
        <title>Analysis of transcripts in methyl jasmonate-treated ginseng hairy roots to identify genes involved in the biosynthesis of ginsenosides and other secondary metabolites.</title>
        <authorList>
            <person name="Choi D.-W."/>
            <person name="Jung J."/>
            <person name="Ha Y.I."/>
            <person name="Park H.-W."/>
            <person name="In D.S."/>
            <person name="Chung H.-J."/>
            <person name="Liu J.R."/>
        </authorList>
    </citation>
    <scope>INDUCTION BY METHYL JASMONATE</scope>
</reference>
<reference key="6">
    <citation type="journal article" date="2013" name="Bull. Environ. Contam. Toxicol.">
        <title>Transcript pattern of cytochrome P450, antioxidant and ginsenoside biosynthetic pathway genes under heavy metal stress in Panax ginseng Meyer.</title>
        <authorList>
            <person name="Balusamy S.R.D."/>
            <person name="Kim Y.-J."/>
            <person name="Rahimi S."/>
            <person name="Senthil K.S."/>
            <person name="Lee O.R."/>
            <person name="Lee S."/>
            <person name="Yang D.-C."/>
        </authorList>
    </citation>
    <scope>INDUCED BY HEAVY METAL STRESS</scope>
</reference>
<reference key="7">
    <citation type="journal article" date="2013" name="J. Ginseng Res.">
        <title>The improvement of ginsenoside accumulation in Panax ginseng as a result of gamma-irradiation.</title>
        <authorList>
            <person name="Kim D.S."/>
            <person name="Song M."/>
            <person name="Kim S.-H."/>
            <person name="Jang D.-S."/>
            <person name="Kim J.-B."/>
            <person name="Ha B.-K."/>
            <person name="Kim S.H."/>
            <person name="Lee K.J."/>
            <person name="Kang S.-Y."/>
            <person name="Jeong I.Y."/>
        </authorList>
    </citation>
    <scope>GENE FAMILY</scope>
</reference>
<reference key="8">
    <citation type="journal article" date="2018" name="Biotechnol. Appl. Biochem.">
        <title>Advances in ginsenoside biosynthesis and metabolic regulation.</title>
        <authorList>
            <person name="Lu J."/>
            <person name="Li J."/>
            <person name="Wang S."/>
            <person name="Yao L."/>
            <person name="Liang W."/>
            <person name="Wang J."/>
            <person name="Gao W."/>
        </authorList>
    </citation>
    <scope>REVIEW</scope>
</reference>
<reference key="9">
    <citation type="journal article" date="2018" name="Molecules">
        <title>Progress on the studies of the key enzymes of ginsenoside biosynthesis.</title>
        <authorList>
            <person name="Yang J.-L."/>
            <person name="Hu Z.-F."/>
            <person name="Zhang T.-T."/>
            <person name="Gu A.-D."/>
            <person name="Gong T."/>
            <person name="Zhu P."/>
        </authorList>
    </citation>
    <scope>REVIEW</scope>
    <scope>NOMENCLATURE</scope>
</reference>
<reference key="10">
    <citation type="journal article" date="2018" name="Molecules">
        <title>The effects of environmental factors on ginsenoside biosynthetic enzyme gene expression and saponin abundance.</title>
        <authorList>
            <person name="Zhang T."/>
            <person name="Han M."/>
            <person name="Yang L."/>
            <person name="Han Z."/>
            <person name="Cheng L."/>
            <person name="Sun Z."/>
            <person name="Yang L."/>
        </authorList>
    </citation>
    <scope>DEVELOPMENTAL STAGE</scope>
    <scope>TISSUE SPECIFICITY</scope>
    <scope>INDUCTION BY ABIOTIC FACTORS</scope>
</reference>
<comment type="function">
    <text evidence="8 9 12">Component of the oleanane-type triterpene saponins biosynthetic pathway (PubMed:15821288, PubMed:29378087). Oxidosqualene cyclase converting oxidosqualene into beta-amyrin, generating five rings and eight asymmetric centers in a single transformation (PubMed:9746369).</text>
</comment>
<comment type="catalytic activity">
    <reaction evidence="8">
        <text>(S)-2,3-epoxysqualene = beta-amyrin</text>
        <dbReference type="Rhea" id="RHEA:31007"/>
        <dbReference type="ChEBI" id="CHEBI:10352"/>
        <dbReference type="ChEBI" id="CHEBI:15441"/>
        <dbReference type="EC" id="5.4.99.39"/>
    </reaction>
    <physiologicalReaction direction="left-to-right" evidence="13">
        <dbReference type="Rhea" id="RHEA:31008"/>
    </physiologicalReaction>
</comment>
<comment type="pathway">
    <text evidence="17">Secondary metabolite biosynthesis; terpenoid biosynthesis.</text>
</comment>
<comment type="subunit">
    <text evidence="1">Monomer.</text>
</comment>
<comment type="subcellular location">
    <subcellularLocation>
        <location evidence="1">Endoplasmic reticulum membrane</location>
        <topology evidence="1">Peripheral membrane protein</topology>
    </subcellularLocation>
</comment>
<comment type="tissue specificity">
    <text evidence="7">Mostly expressed in roots, and, to a lower extent, in stems and leaves.</text>
</comment>
<comment type="developmental stage">
    <text evidence="7">Progressive decrease in roots from the leaf opened stage to the green fruit, red fruit and root growth stages, respectively.</text>
</comment>
<comment type="induction">
    <text evidence="3 4 5 6 7">Induced methyl jasmonate (MeJA) in adventitious roots (PubMed:15356323, PubMed:15538577). Accumulates upon Cle-mediated signaling, an elicitor derived from fungal cell walls of C.lagenarium, thus inducing the accumulation of saponins. Triggered by ethylene (ACC), rose bengal (RB), nitric oxide (NO) and hydrogen peroxide (H(2)O(2)) (PubMed:15821288). Accumulates under heavy metal stress in the presence of NiCl(2) and CdCl(2) (PubMed:23232757). Influenced in roots and leaves by relative humidity, and in roots by soil water potential (PubMed:30577538).</text>
</comment>
<comment type="similarity">
    <text evidence="17">Belongs to the terpene cyclase/mutase family.</text>
</comment>